<accession>B5E6A6</accession>
<name>RS6_STRP4</name>
<reference key="1">
    <citation type="journal article" date="2001" name="Microb. Drug Resist.">
        <title>Annotated draft genomic sequence from a Streptococcus pneumoniae type 19F clinical isolate.</title>
        <authorList>
            <person name="Dopazo J."/>
            <person name="Mendoza A."/>
            <person name="Herrero J."/>
            <person name="Caldara F."/>
            <person name="Humbert Y."/>
            <person name="Friedli L."/>
            <person name="Guerrier M."/>
            <person name="Grand-Schenk E."/>
            <person name="Gandin C."/>
            <person name="de Francesco M."/>
            <person name="Polissi A."/>
            <person name="Buell G."/>
            <person name="Feger G."/>
            <person name="Garcia E."/>
            <person name="Peitsch M."/>
            <person name="Garcia-Bustos J.F."/>
        </authorList>
    </citation>
    <scope>NUCLEOTIDE SEQUENCE [LARGE SCALE GENOMIC DNA]</scope>
    <source>
        <strain>G54</strain>
    </source>
</reference>
<reference key="2">
    <citation type="submission" date="2008-03" db="EMBL/GenBank/DDBJ databases">
        <title>Pneumococcal beta glucoside metabolism investigated by whole genome comparison.</title>
        <authorList>
            <person name="Mulas L."/>
            <person name="Trappetti C."/>
            <person name="Hakenbeck R."/>
            <person name="Iannelli F."/>
            <person name="Pozzi G."/>
            <person name="Davidsen T.M."/>
            <person name="Tettelin H."/>
            <person name="Oggioni M."/>
        </authorList>
    </citation>
    <scope>NUCLEOTIDE SEQUENCE [LARGE SCALE GENOMIC DNA]</scope>
    <source>
        <strain>G54</strain>
    </source>
</reference>
<evidence type="ECO:0000255" key="1">
    <source>
        <dbReference type="HAMAP-Rule" id="MF_00360"/>
    </source>
</evidence>
<evidence type="ECO:0000305" key="2"/>
<protein>
    <recommendedName>
        <fullName evidence="1">Small ribosomal subunit protein bS6</fullName>
    </recommendedName>
    <alternativeName>
        <fullName evidence="2">30S ribosomal protein S6</fullName>
    </alternativeName>
</protein>
<dbReference type="EMBL" id="CP001015">
    <property type="protein sequence ID" value="ACF56838.1"/>
    <property type="molecule type" value="Genomic_DNA"/>
</dbReference>
<dbReference type="KEGG" id="spx:SPG_1467"/>
<dbReference type="HOGENOM" id="CLU_113441_5_3_9"/>
<dbReference type="GO" id="GO:0005737">
    <property type="term" value="C:cytoplasm"/>
    <property type="evidence" value="ECO:0007669"/>
    <property type="project" value="UniProtKB-ARBA"/>
</dbReference>
<dbReference type="GO" id="GO:1990904">
    <property type="term" value="C:ribonucleoprotein complex"/>
    <property type="evidence" value="ECO:0007669"/>
    <property type="project" value="UniProtKB-KW"/>
</dbReference>
<dbReference type="GO" id="GO:0005840">
    <property type="term" value="C:ribosome"/>
    <property type="evidence" value="ECO:0007669"/>
    <property type="project" value="UniProtKB-KW"/>
</dbReference>
<dbReference type="GO" id="GO:0070181">
    <property type="term" value="F:small ribosomal subunit rRNA binding"/>
    <property type="evidence" value="ECO:0007669"/>
    <property type="project" value="TreeGrafter"/>
</dbReference>
<dbReference type="GO" id="GO:0003735">
    <property type="term" value="F:structural constituent of ribosome"/>
    <property type="evidence" value="ECO:0007669"/>
    <property type="project" value="InterPro"/>
</dbReference>
<dbReference type="GO" id="GO:0006412">
    <property type="term" value="P:translation"/>
    <property type="evidence" value="ECO:0007669"/>
    <property type="project" value="UniProtKB-UniRule"/>
</dbReference>
<dbReference type="CDD" id="cd00473">
    <property type="entry name" value="bS6"/>
    <property type="match status" value="1"/>
</dbReference>
<dbReference type="FunFam" id="3.30.70.60:FF:000002">
    <property type="entry name" value="30S ribosomal protein S6"/>
    <property type="match status" value="1"/>
</dbReference>
<dbReference type="Gene3D" id="3.30.70.60">
    <property type="match status" value="1"/>
</dbReference>
<dbReference type="HAMAP" id="MF_00360">
    <property type="entry name" value="Ribosomal_bS6"/>
    <property type="match status" value="1"/>
</dbReference>
<dbReference type="InterPro" id="IPR000529">
    <property type="entry name" value="Ribosomal_bS6"/>
</dbReference>
<dbReference type="InterPro" id="IPR035980">
    <property type="entry name" value="Ribosomal_bS6_sf"/>
</dbReference>
<dbReference type="InterPro" id="IPR020814">
    <property type="entry name" value="Ribosomal_S6_plastid/chlpt"/>
</dbReference>
<dbReference type="InterPro" id="IPR014717">
    <property type="entry name" value="Transl_elong_EF1B/ribsomal_bS6"/>
</dbReference>
<dbReference type="NCBIfam" id="TIGR00166">
    <property type="entry name" value="S6"/>
    <property type="match status" value="1"/>
</dbReference>
<dbReference type="PANTHER" id="PTHR21011">
    <property type="entry name" value="MITOCHONDRIAL 28S RIBOSOMAL PROTEIN S6"/>
    <property type="match status" value="1"/>
</dbReference>
<dbReference type="PANTHER" id="PTHR21011:SF1">
    <property type="entry name" value="SMALL RIBOSOMAL SUBUNIT PROTEIN BS6M"/>
    <property type="match status" value="1"/>
</dbReference>
<dbReference type="Pfam" id="PF01250">
    <property type="entry name" value="Ribosomal_S6"/>
    <property type="match status" value="1"/>
</dbReference>
<dbReference type="SUPFAM" id="SSF54995">
    <property type="entry name" value="Ribosomal protein S6"/>
    <property type="match status" value="1"/>
</dbReference>
<proteinExistence type="inferred from homology"/>
<comment type="function">
    <text evidence="1">Binds together with bS18 to 16S ribosomal RNA.</text>
</comment>
<comment type="similarity">
    <text evidence="1">Belongs to the bacterial ribosomal protein bS6 family.</text>
</comment>
<keyword id="KW-0687">Ribonucleoprotein</keyword>
<keyword id="KW-0689">Ribosomal protein</keyword>
<keyword id="KW-0694">RNA-binding</keyword>
<keyword id="KW-0699">rRNA-binding</keyword>
<sequence length="96" mass="11150">MAKYEILYIIRPNIEEEAKNALVARFDSILTDNGATVVESKTWEKRRLAYEIQDFREGLYHIVXVEANDDAALKEFDRLSKINADILRHMIVKIDA</sequence>
<organism>
    <name type="scientific">Streptococcus pneumoniae serotype 19F (strain G54)</name>
    <dbReference type="NCBI Taxonomy" id="512566"/>
    <lineage>
        <taxon>Bacteria</taxon>
        <taxon>Bacillati</taxon>
        <taxon>Bacillota</taxon>
        <taxon>Bacilli</taxon>
        <taxon>Lactobacillales</taxon>
        <taxon>Streptococcaceae</taxon>
        <taxon>Streptococcus</taxon>
    </lineage>
</organism>
<feature type="chain" id="PRO_1000120810" description="Small ribosomal subunit protein bS6">
    <location>
        <begin position="1"/>
        <end position="96"/>
    </location>
</feature>
<gene>
    <name evidence="1" type="primary">rpsF</name>
    <name type="ordered locus">SPG_1467</name>
</gene>